<comment type="function">
    <text evidence="1">Catalyzes the phosphorylation of the hydroxyl group of 4-methyl-5-beta-hydroxyethylthiazole (THZ).</text>
</comment>
<comment type="catalytic activity">
    <reaction evidence="1">
        <text>5-(2-hydroxyethyl)-4-methylthiazole + ATP = 4-methyl-5-(2-phosphooxyethyl)-thiazole + ADP + H(+)</text>
        <dbReference type="Rhea" id="RHEA:24212"/>
        <dbReference type="ChEBI" id="CHEBI:15378"/>
        <dbReference type="ChEBI" id="CHEBI:17957"/>
        <dbReference type="ChEBI" id="CHEBI:30616"/>
        <dbReference type="ChEBI" id="CHEBI:58296"/>
        <dbReference type="ChEBI" id="CHEBI:456216"/>
        <dbReference type="EC" id="2.7.1.50"/>
    </reaction>
</comment>
<comment type="cofactor">
    <cofactor evidence="1">
        <name>Mg(2+)</name>
        <dbReference type="ChEBI" id="CHEBI:18420"/>
    </cofactor>
</comment>
<comment type="pathway">
    <text evidence="1">Cofactor biosynthesis; thiamine diphosphate biosynthesis; 4-methyl-5-(2-phosphoethyl)-thiazole from 5-(2-hydroxyethyl)-4-methylthiazole: step 1/1.</text>
</comment>
<comment type="similarity">
    <text evidence="1">Belongs to the Thz kinase family.</text>
</comment>
<comment type="sequence caution" evidence="2">
    <conflict type="erroneous initiation">
        <sequence resource="EMBL-CDS" id="ABA53542"/>
    </conflict>
</comment>
<reference key="1">
    <citation type="journal article" date="2010" name="Genome Biol. Evol.">
        <title>Continuing evolution of Burkholderia mallei through genome reduction and large-scale rearrangements.</title>
        <authorList>
            <person name="Losada L."/>
            <person name="Ronning C.M."/>
            <person name="DeShazer D."/>
            <person name="Woods D."/>
            <person name="Fedorova N."/>
            <person name="Kim H.S."/>
            <person name="Shabalina S.A."/>
            <person name="Pearson T.R."/>
            <person name="Brinkac L."/>
            <person name="Tan P."/>
            <person name="Nandi T."/>
            <person name="Crabtree J."/>
            <person name="Badger J."/>
            <person name="Beckstrom-Sternberg S."/>
            <person name="Saqib M."/>
            <person name="Schutzer S.E."/>
            <person name="Keim P."/>
            <person name="Nierman W.C."/>
        </authorList>
    </citation>
    <scope>NUCLEOTIDE SEQUENCE [LARGE SCALE GENOMIC DNA]</scope>
    <source>
        <strain>1710b</strain>
    </source>
</reference>
<protein>
    <recommendedName>
        <fullName evidence="1">Hydroxyethylthiazole kinase</fullName>
        <ecNumber evidence="1">2.7.1.50</ecNumber>
    </recommendedName>
    <alternativeName>
        <fullName evidence="1">4-methyl-5-beta-hydroxyethylthiazole kinase</fullName>
        <shortName evidence="1">TH kinase</shortName>
        <shortName evidence="1">Thz kinase</shortName>
    </alternativeName>
</protein>
<keyword id="KW-0067">ATP-binding</keyword>
<keyword id="KW-0418">Kinase</keyword>
<keyword id="KW-0460">Magnesium</keyword>
<keyword id="KW-0479">Metal-binding</keyword>
<keyword id="KW-0547">Nucleotide-binding</keyword>
<keyword id="KW-0784">Thiamine biosynthesis</keyword>
<keyword id="KW-0808">Transferase</keyword>
<dbReference type="EC" id="2.7.1.50" evidence="1"/>
<dbReference type="EMBL" id="CP000125">
    <property type="protein sequence ID" value="ABA53542.1"/>
    <property type="status" value="ALT_INIT"/>
    <property type="molecule type" value="Genomic_DNA"/>
</dbReference>
<dbReference type="RefSeq" id="WP_038724243.1">
    <property type="nucleotide sequence ID" value="NC_007435.1"/>
</dbReference>
<dbReference type="SMR" id="Q3JME7"/>
<dbReference type="EnsemblBacteria" id="ABA53542">
    <property type="protein sequence ID" value="ABA53542"/>
    <property type="gene ID" value="BURPS1710b_A0097"/>
</dbReference>
<dbReference type="KEGG" id="bpm:BURPS1710b_A0097"/>
<dbReference type="HOGENOM" id="CLU_019943_0_1_4"/>
<dbReference type="UniPathway" id="UPA00060">
    <property type="reaction ID" value="UER00139"/>
</dbReference>
<dbReference type="Proteomes" id="UP000002700">
    <property type="component" value="Chromosome II"/>
</dbReference>
<dbReference type="GO" id="GO:0005524">
    <property type="term" value="F:ATP binding"/>
    <property type="evidence" value="ECO:0007669"/>
    <property type="project" value="UniProtKB-UniRule"/>
</dbReference>
<dbReference type="GO" id="GO:0004417">
    <property type="term" value="F:hydroxyethylthiazole kinase activity"/>
    <property type="evidence" value="ECO:0007669"/>
    <property type="project" value="UniProtKB-UniRule"/>
</dbReference>
<dbReference type="GO" id="GO:0000287">
    <property type="term" value="F:magnesium ion binding"/>
    <property type="evidence" value="ECO:0007669"/>
    <property type="project" value="UniProtKB-UniRule"/>
</dbReference>
<dbReference type="GO" id="GO:0009228">
    <property type="term" value="P:thiamine biosynthetic process"/>
    <property type="evidence" value="ECO:0007669"/>
    <property type="project" value="UniProtKB-KW"/>
</dbReference>
<dbReference type="GO" id="GO:0009229">
    <property type="term" value="P:thiamine diphosphate biosynthetic process"/>
    <property type="evidence" value="ECO:0007669"/>
    <property type="project" value="UniProtKB-UniRule"/>
</dbReference>
<dbReference type="Gene3D" id="3.40.1190.20">
    <property type="match status" value="1"/>
</dbReference>
<dbReference type="HAMAP" id="MF_00228">
    <property type="entry name" value="Thz_kinase"/>
    <property type="match status" value="1"/>
</dbReference>
<dbReference type="InterPro" id="IPR000417">
    <property type="entry name" value="Hyethyz_kinase"/>
</dbReference>
<dbReference type="InterPro" id="IPR029056">
    <property type="entry name" value="Ribokinase-like"/>
</dbReference>
<dbReference type="Pfam" id="PF02110">
    <property type="entry name" value="HK"/>
    <property type="match status" value="1"/>
</dbReference>
<dbReference type="PIRSF" id="PIRSF000513">
    <property type="entry name" value="Thz_kinase"/>
    <property type="match status" value="1"/>
</dbReference>
<dbReference type="PRINTS" id="PR01099">
    <property type="entry name" value="HYETHTZKNASE"/>
</dbReference>
<dbReference type="SUPFAM" id="SSF53613">
    <property type="entry name" value="Ribokinase-like"/>
    <property type="match status" value="1"/>
</dbReference>
<sequence length="276" mass="27540">MESISWNTPSVRDALAAVKRDAPFIYGLTNYVAANLSANVLLAVGAAPAIGAAADWPARFGAGANALWINTAALMSSGADTLLTAARAASKAGTRWVLDPVALGAGAPEYDAIVRDLLALRPTVIRGNASELIALAGGTAAGKGVDTTASPESALAFIGDLARRSGAVVSVSGPTDYVTDGVATLAVAGGDARLTRVTGAGCALGALIAALLAQRGAALAAASAAHAIYATAAERAADARGTASFAVRFVDELSLLDPAESSRDRSAGQIGAKRRE</sequence>
<proteinExistence type="inferred from homology"/>
<organism>
    <name type="scientific">Burkholderia pseudomallei (strain 1710b)</name>
    <dbReference type="NCBI Taxonomy" id="320372"/>
    <lineage>
        <taxon>Bacteria</taxon>
        <taxon>Pseudomonadati</taxon>
        <taxon>Pseudomonadota</taxon>
        <taxon>Betaproteobacteria</taxon>
        <taxon>Burkholderiales</taxon>
        <taxon>Burkholderiaceae</taxon>
        <taxon>Burkholderia</taxon>
        <taxon>pseudomallei group</taxon>
    </lineage>
</organism>
<feature type="chain" id="PRO_0000383828" description="Hydroxyethylthiazole kinase">
    <location>
        <begin position="1"/>
        <end position="276"/>
    </location>
</feature>
<feature type="binding site" evidence="1">
    <location>
        <position position="126"/>
    </location>
    <ligand>
        <name>ATP</name>
        <dbReference type="ChEBI" id="CHEBI:30616"/>
    </ligand>
</feature>
<feature type="binding site" evidence="1">
    <location>
        <position position="172"/>
    </location>
    <ligand>
        <name>ATP</name>
        <dbReference type="ChEBI" id="CHEBI:30616"/>
    </ligand>
</feature>
<feature type="binding site" evidence="1">
    <location>
        <position position="199"/>
    </location>
    <ligand>
        <name>substrate</name>
    </ligand>
</feature>
<gene>
    <name evidence="1" type="primary">thiM</name>
    <name type="ordered locus">BURPS1710b_A0097</name>
</gene>
<evidence type="ECO:0000255" key="1">
    <source>
        <dbReference type="HAMAP-Rule" id="MF_00228"/>
    </source>
</evidence>
<evidence type="ECO:0000305" key="2"/>
<name>THIM_BURP1</name>
<accession>Q3JME7</accession>